<proteinExistence type="inferred from homology"/>
<dbReference type="EMBL" id="AE016818">
    <property type="protein sequence ID" value="AAS52722.1"/>
    <property type="molecule type" value="Genomic_DNA"/>
</dbReference>
<dbReference type="RefSeq" id="NP_984898.1">
    <property type="nucleotide sequence ID" value="NM_210252.1"/>
</dbReference>
<dbReference type="SMR" id="Q757H5"/>
<dbReference type="FunCoup" id="Q757H5">
    <property type="interactions" value="156"/>
</dbReference>
<dbReference type="STRING" id="284811.Q757H5"/>
<dbReference type="EnsemblFungi" id="AAS52722">
    <property type="protein sequence ID" value="AAS52722"/>
    <property type="gene ID" value="AGOS_AER038C"/>
</dbReference>
<dbReference type="GeneID" id="4621100"/>
<dbReference type="KEGG" id="ago:AGOS_AER038C"/>
<dbReference type="eggNOG" id="ENOG502S80M">
    <property type="taxonomic scope" value="Eukaryota"/>
</dbReference>
<dbReference type="HOGENOM" id="CLU_1057595_0_0_1"/>
<dbReference type="InParanoid" id="Q757H5"/>
<dbReference type="OMA" id="WFERQNE"/>
<dbReference type="OrthoDB" id="4070429at2759"/>
<dbReference type="Proteomes" id="UP000000591">
    <property type="component" value="Chromosome V"/>
</dbReference>
<dbReference type="GO" id="GO:0005681">
    <property type="term" value="C:spliceosomal complex"/>
    <property type="evidence" value="ECO:0007669"/>
    <property type="project" value="UniProtKB-KW"/>
</dbReference>
<dbReference type="GO" id="GO:0003723">
    <property type="term" value="F:RNA binding"/>
    <property type="evidence" value="ECO:0007669"/>
    <property type="project" value="UniProtKB-KW"/>
</dbReference>
<dbReference type="GO" id="GO:0006397">
    <property type="term" value="P:mRNA processing"/>
    <property type="evidence" value="ECO:0007669"/>
    <property type="project" value="UniProtKB-KW"/>
</dbReference>
<dbReference type="GO" id="GO:0008380">
    <property type="term" value="P:RNA splicing"/>
    <property type="evidence" value="ECO:0007669"/>
    <property type="project" value="UniProtKB-KW"/>
</dbReference>
<keyword id="KW-0507">mRNA processing</keyword>
<keyword id="KW-0508">mRNA splicing</keyword>
<keyword id="KW-0539">Nucleus</keyword>
<keyword id="KW-1185">Reference proteome</keyword>
<keyword id="KW-0687">Ribonucleoprotein</keyword>
<keyword id="KW-0694">RNA-binding</keyword>
<keyword id="KW-0747">Spliceosome</keyword>
<accession>Q757H5</accession>
<evidence type="ECO:0000250" key="1"/>
<evidence type="ECO:0000256" key="2">
    <source>
        <dbReference type="SAM" id="MobiDB-lite"/>
    </source>
</evidence>
<evidence type="ECO:0000305" key="3"/>
<name>SP381_EREGS</name>
<feature type="chain" id="PRO_0000324505" description="Pre-mRNA-splicing factor SPP381">
    <location>
        <begin position="1"/>
        <end position="264"/>
    </location>
</feature>
<feature type="region of interest" description="Disordered" evidence="2">
    <location>
        <begin position="1"/>
        <end position="109"/>
    </location>
</feature>
<feature type="region of interest" description="Disordered" evidence="2">
    <location>
        <begin position="178"/>
        <end position="264"/>
    </location>
</feature>
<feature type="compositionally biased region" description="Acidic residues" evidence="2">
    <location>
        <begin position="64"/>
        <end position="80"/>
    </location>
</feature>
<feature type="compositionally biased region" description="Basic and acidic residues" evidence="2">
    <location>
        <begin position="178"/>
        <end position="188"/>
    </location>
</feature>
<sequence length="264" mass="29198">MAIRHFRRQREQVTSGSSSDTETSDVSEQDTGAGEGPTEAETRAEGAEQGAWERAPSVAGSEAGESDEDDSESSSSDDEEVVLHRPVFLKKRDPGAGPAARTGAVSGAQERTLDQVQHHNAVQDKERALKQIATSYSTDKELLHRIAQLETDGDTDSDSERREHELWAQRRHQRMLRLREEERRRQSELEENEAARLTNSALPMDDAGIQTAGGAERGTRPASSSDARKRRGPEAKFKPSKVQKPQLKRTASPSRADENEFSIL</sequence>
<protein>
    <recommendedName>
        <fullName>Pre-mRNA-splicing factor SPP381</fullName>
    </recommendedName>
</protein>
<reference key="1">
    <citation type="journal article" date="2004" name="Science">
        <title>The Ashbya gossypii genome as a tool for mapping the ancient Saccharomyces cerevisiae genome.</title>
        <authorList>
            <person name="Dietrich F.S."/>
            <person name="Voegeli S."/>
            <person name="Brachat S."/>
            <person name="Lerch A."/>
            <person name="Gates K."/>
            <person name="Steiner S."/>
            <person name="Mohr C."/>
            <person name="Poehlmann R."/>
            <person name="Luedi P."/>
            <person name="Choi S."/>
            <person name="Wing R.A."/>
            <person name="Flavier A."/>
            <person name="Gaffney T.D."/>
            <person name="Philippsen P."/>
        </authorList>
    </citation>
    <scope>NUCLEOTIDE SEQUENCE [LARGE SCALE GENOMIC DNA]</scope>
    <source>
        <strain>ATCC 10895 / CBS 109.51 / FGSC 9923 / NRRL Y-1056</strain>
    </source>
</reference>
<reference key="2">
    <citation type="journal article" date="2013" name="G3 (Bethesda)">
        <title>Genomes of Ashbya fungi isolated from insects reveal four mating-type loci, numerous translocations, lack of transposons, and distinct gene duplications.</title>
        <authorList>
            <person name="Dietrich F.S."/>
            <person name="Voegeli S."/>
            <person name="Kuo S."/>
            <person name="Philippsen P."/>
        </authorList>
    </citation>
    <scope>GENOME REANNOTATION</scope>
    <source>
        <strain>ATCC 10895 / CBS 109.51 / FGSC 9923 / NRRL Y-1056</strain>
    </source>
</reference>
<organism>
    <name type="scientific">Eremothecium gossypii (strain ATCC 10895 / CBS 109.51 / FGSC 9923 / NRRL Y-1056)</name>
    <name type="common">Yeast</name>
    <name type="synonym">Ashbya gossypii</name>
    <dbReference type="NCBI Taxonomy" id="284811"/>
    <lineage>
        <taxon>Eukaryota</taxon>
        <taxon>Fungi</taxon>
        <taxon>Dikarya</taxon>
        <taxon>Ascomycota</taxon>
        <taxon>Saccharomycotina</taxon>
        <taxon>Saccharomycetes</taxon>
        <taxon>Saccharomycetales</taxon>
        <taxon>Saccharomycetaceae</taxon>
        <taxon>Eremothecium</taxon>
    </lineage>
</organism>
<gene>
    <name type="primary">SPP381</name>
    <name type="ordered locus">AER038C</name>
</gene>
<comment type="function">
    <text evidence="1">Component of the spliceosome and rRNA processing machinery. In association with the spliceosomal U4/U6.U5 tri-snRNP particle, required for splicing of pre-mRNA (By similarity).</text>
</comment>
<comment type="subunit">
    <text evidence="1">Component of the 25S U4/U6.U5 tri-snRNP particle, a subcomplex of the spliceosome.</text>
</comment>
<comment type="subcellular location">
    <subcellularLocation>
        <location evidence="1">Nucleus</location>
    </subcellularLocation>
</comment>
<comment type="similarity">
    <text evidence="3">Belongs to the SPP381 family.</text>
</comment>